<protein>
    <recommendedName>
        <fullName evidence="1">ADP-L-glycero-D-manno-heptose-6-epimerase</fullName>
        <ecNumber evidence="1">5.1.3.20</ecNumber>
    </recommendedName>
    <alternativeName>
        <fullName evidence="1">ADP-L-glycero-beta-D-manno-heptose-6-epimerase</fullName>
        <shortName evidence="1">ADP-glyceromanno-heptose 6-epimerase</shortName>
        <shortName evidence="1">ADP-hep 6-epimerase</shortName>
        <shortName evidence="1">AGME</shortName>
    </alternativeName>
</protein>
<organism>
    <name type="scientific">Polynucleobacter necessarius subsp. necessarius (strain STIR1)</name>
    <dbReference type="NCBI Taxonomy" id="452638"/>
    <lineage>
        <taxon>Bacteria</taxon>
        <taxon>Pseudomonadati</taxon>
        <taxon>Pseudomonadota</taxon>
        <taxon>Betaproteobacteria</taxon>
        <taxon>Burkholderiales</taxon>
        <taxon>Burkholderiaceae</taxon>
        <taxon>Polynucleobacter</taxon>
    </lineage>
</organism>
<keyword id="KW-0119">Carbohydrate metabolism</keyword>
<keyword id="KW-0413">Isomerase</keyword>
<keyword id="KW-0521">NADP</keyword>
<reference key="1">
    <citation type="journal article" date="2013" name="Proc. Natl. Acad. Sci. U.S.A.">
        <title>Polynucleobacter necessarius, a model for genome reduction in both free-living and symbiotic bacteria.</title>
        <authorList>
            <person name="Boscaro V."/>
            <person name="Felletti M."/>
            <person name="Vannini C."/>
            <person name="Ackerman M.S."/>
            <person name="Chain P.S."/>
            <person name="Malfatti S."/>
            <person name="Vergez L.M."/>
            <person name="Shin M."/>
            <person name="Doak T.G."/>
            <person name="Lynch M."/>
            <person name="Petroni G."/>
        </authorList>
    </citation>
    <scope>NUCLEOTIDE SEQUENCE [LARGE SCALE GENOMIC DNA]</scope>
    <source>
        <strain>STIR1</strain>
    </source>
</reference>
<evidence type="ECO:0000255" key="1">
    <source>
        <dbReference type="HAMAP-Rule" id="MF_01601"/>
    </source>
</evidence>
<feature type="chain" id="PRO_1000148084" description="ADP-L-glycero-D-manno-heptose-6-epimerase">
    <location>
        <begin position="1"/>
        <end position="339"/>
    </location>
</feature>
<feature type="active site" description="Proton acceptor" evidence="1">
    <location>
        <position position="139"/>
    </location>
</feature>
<feature type="active site" description="Proton acceptor" evidence="1">
    <location>
        <position position="179"/>
    </location>
</feature>
<feature type="binding site" evidence="1">
    <location>
        <begin position="11"/>
        <end position="12"/>
    </location>
    <ligand>
        <name>NADP(+)</name>
        <dbReference type="ChEBI" id="CHEBI:58349"/>
    </ligand>
</feature>
<feature type="binding site" evidence="1">
    <location>
        <begin position="32"/>
        <end position="33"/>
    </location>
    <ligand>
        <name>NADP(+)</name>
        <dbReference type="ChEBI" id="CHEBI:58349"/>
    </ligand>
</feature>
<feature type="binding site" evidence="1">
    <location>
        <position position="39"/>
    </location>
    <ligand>
        <name>NADP(+)</name>
        <dbReference type="ChEBI" id="CHEBI:58349"/>
    </ligand>
</feature>
<feature type="binding site" evidence="1">
    <location>
        <position position="54"/>
    </location>
    <ligand>
        <name>NADP(+)</name>
        <dbReference type="ChEBI" id="CHEBI:58349"/>
    </ligand>
</feature>
<feature type="binding site" evidence="1">
    <location>
        <begin position="75"/>
        <end position="79"/>
    </location>
    <ligand>
        <name>NADP(+)</name>
        <dbReference type="ChEBI" id="CHEBI:58349"/>
    </ligand>
</feature>
<feature type="binding site" evidence="1">
    <location>
        <position position="92"/>
    </location>
    <ligand>
        <name>NADP(+)</name>
        <dbReference type="ChEBI" id="CHEBI:58349"/>
    </ligand>
</feature>
<feature type="binding site" evidence="1">
    <location>
        <position position="143"/>
    </location>
    <ligand>
        <name>NADP(+)</name>
        <dbReference type="ChEBI" id="CHEBI:58349"/>
    </ligand>
</feature>
<feature type="binding site" evidence="1">
    <location>
        <position position="170"/>
    </location>
    <ligand>
        <name>substrate</name>
    </ligand>
</feature>
<feature type="binding site" evidence="1">
    <location>
        <position position="171"/>
    </location>
    <ligand>
        <name>NADP(+)</name>
        <dbReference type="ChEBI" id="CHEBI:58349"/>
    </ligand>
</feature>
<feature type="binding site" evidence="1">
    <location>
        <position position="179"/>
    </location>
    <ligand>
        <name>NADP(+)</name>
        <dbReference type="ChEBI" id="CHEBI:58349"/>
    </ligand>
</feature>
<feature type="binding site" evidence="1">
    <location>
        <position position="181"/>
    </location>
    <ligand>
        <name>substrate</name>
    </ligand>
</feature>
<feature type="binding site" evidence="1">
    <location>
        <position position="188"/>
    </location>
    <ligand>
        <name>substrate</name>
    </ligand>
</feature>
<feature type="binding site" evidence="1">
    <location>
        <begin position="202"/>
        <end position="205"/>
    </location>
    <ligand>
        <name>substrate</name>
    </ligand>
</feature>
<feature type="binding site" evidence="1">
    <location>
        <position position="215"/>
    </location>
    <ligand>
        <name>substrate</name>
    </ligand>
</feature>
<feature type="binding site" evidence="1">
    <location>
        <position position="294"/>
    </location>
    <ligand>
        <name>substrate</name>
    </ligand>
</feature>
<accession>B1XVP6</accession>
<name>HLDD_POLNS</name>
<sequence>MTIIVTGAAGFIGANIVQALNVRGEKNIIAVDDLRPADKYRNLADLDIIDYLDKDEFLEAFRSGRFGKVKAVFHEGACSDTMETDGIFMMANNYRYTMDLLDICTAQKVQLLYASSAATYGGSDVFVESREHEKPLNIYGYSKFLFDQVMRKRFAEKTNTAQVVGFRYFNVYGPRESHKGRMASVAFHQYYQYKANGHVKLFGEYGGYGAGEQSRDFVSVEDVVKVNLFFLDHPEISGIFNLGSGRAQPFNDVAHAVANAMRKLDKAAPASLQELVKEKAIEYIPFPDALKGRYQCFTQADLTKLRAAGYAEPFLTVEQGVGRYIEWLEANSSFLANPL</sequence>
<proteinExistence type="inferred from homology"/>
<comment type="function">
    <text evidence="1">Catalyzes the interconversion between ADP-D-glycero-beta-D-manno-heptose and ADP-L-glycero-beta-D-manno-heptose via an epimerization at carbon 6 of the heptose.</text>
</comment>
<comment type="catalytic activity">
    <reaction evidence="1">
        <text>ADP-D-glycero-beta-D-manno-heptose = ADP-L-glycero-beta-D-manno-heptose</text>
        <dbReference type="Rhea" id="RHEA:17577"/>
        <dbReference type="ChEBI" id="CHEBI:59967"/>
        <dbReference type="ChEBI" id="CHEBI:61506"/>
        <dbReference type="EC" id="5.1.3.20"/>
    </reaction>
</comment>
<comment type="cofactor">
    <cofactor evidence="1">
        <name>NADP(+)</name>
        <dbReference type="ChEBI" id="CHEBI:58349"/>
    </cofactor>
    <text evidence="1">Binds 1 NADP(+) per subunit.</text>
</comment>
<comment type="pathway">
    <text evidence="1">Nucleotide-sugar biosynthesis; ADP-L-glycero-beta-D-manno-heptose biosynthesis; ADP-L-glycero-beta-D-manno-heptose from D-glycero-beta-D-manno-heptose 7-phosphate: step 4/4.</text>
</comment>
<comment type="subunit">
    <text evidence="1">Homopentamer.</text>
</comment>
<comment type="domain">
    <text evidence="1">Contains a large N-terminal NADP-binding domain, and a smaller C-terminal substrate-binding domain.</text>
</comment>
<comment type="similarity">
    <text evidence="1">Belongs to the NAD(P)-dependent epimerase/dehydratase family. HldD subfamily.</text>
</comment>
<dbReference type="EC" id="5.1.3.20" evidence="1"/>
<dbReference type="EMBL" id="CP001010">
    <property type="protein sequence ID" value="ACB44423.1"/>
    <property type="molecule type" value="Genomic_DNA"/>
</dbReference>
<dbReference type="SMR" id="B1XVP6"/>
<dbReference type="STRING" id="452638.Pnec_1303"/>
<dbReference type="KEGG" id="pne:Pnec_1303"/>
<dbReference type="eggNOG" id="COG0451">
    <property type="taxonomic scope" value="Bacteria"/>
</dbReference>
<dbReference type="HOGENOM" id="CLU_007383_1_3_4"/>
<dbReference type="OrthoDB" id="9803010at2"/>
<dbReference type="UniPathway" id="UPA00356">
    <property type="reaction ID" value="UER00440"/>
</dbReference>
<dbReference type="GO" id="GO:0008712">
    <property type="term" value="F:ADP-glyceromanno-heptose 6-epimerase activity"/>
    <property type="evidence" value="ECO:0007669"/>
    <property type="project" value="UniProtKB-UniRule"/>
</dbReference>
<dbReference type="GO" id="GO:0050661">
    <property type="term" value="F:NADP binding"/>
    <property type="evidence" value="ECO:0007669"/>
    <property type="project" value="InterPro"/>
</dbReference>
<dbReference type="GO" id="GO:0097171">
    <property type="term" value="P:ADP-L-glycero-beta-D-manno-heptose biosynthetic process"/>
    <property type="evidence" value="ECO:0007669"/>
    <property type="project" value="UniProtKB-UniPathway"/>
</dbReference>
<dbReference type="GO" id="GO:0005975">
    <property type="term" value="P:carbohydrate metabolic process"/>
    <property type="evidence" value="ECO:0007669"/>
    <property type="project" value="UniProtKB-UniRule"/>
</dbReference>
<dbReference type="CDD" id="cd05248">
    <property type="entry name" value="ADP_GME_SDR_e"/>
    <property type="match status" value="1"/>
</dbReference>
<dbReference type="Gene3D" id="3.40.50.720">
    <property type="entry name" value="NAD(P)-binding Rossmann-like Domain"/>
    <property type="match status" value="1"/>
</dbReference>
<dbReference type="Gene3D" id="3.90.25.10">
    <property type="entry name" value="UDP-galactose 4-epimerase, domain 1"/>
    <property type="match status" value="1"/>
</dbReference>
<dbReference type="HAMAP" id="MF_01601">
    <property type="entry name" value="Heptose_epimerase"/>
    <property type="match status" value="1"/>
</dbReference>
<dbReference type="InterPro" id="IPR001509">
    <property type="entry name" value="Epimerase_deHydtase"/>
</dbReference>
<dbReference type="InterPro" id="IPR011912">
    <property type="entry name" value="Heptose_epim"/>
</dbReference>
<dbReference type="InterPro" id="IPR036291">
    <property type="entry name" value="NAD(P)-bd_dom_sf"/>
</dbReference>
<dbReference type="NCBIfam" id="TIGR02197">
    <property type="entry name" value="heptose_epim"/>
    <property type="match status" value="1"/>
</dbReference>
<dbReference type="PANTHER" id="PTHR43103:SF3">
    <property type="entry name" value="ADP-L-GLYCERO-D-MANNO-HEPTOSE-6-EPIMERASE"/>
    <property type="match status" value="1"/>
</dbReference>
<dbReference type="PANTHER" id="PTHR43103">
    <property type="entry name" value="NUCLEOSIDE-DIPHOSPHATE-SUGAR EPIMERASE"/>
    <property type="match status" value="1"/>
</dbReference>
<dbReference type="Pfam" id="PF01370">
    <property type="entry name" value="Epimerase"/>
    <property type="match status" value="1"/>
</dbReference>
<dbReference type="SUPFAM" id="SSF51735">
    <property type="entry name" value="NAD(P)-binding Rossmann-fold domains"/>
    <property type="match status" value="1"/>
</dbReference>
<gene>
    <name evidence="1" type="primary">hldD</name>
    <name type="ordered locus">Pnec_1303</name>
</gene>